<comment type="function">
    <text evidence="1">Catalyzes the synthesis of GMP from XMP.</text>
</comment>
<comment type="catalytic activity">
    <reaction evidence="1">
        <text>XMP + L-glutamine + ATP + H2O = GMP + L-glutamate + AMP + diphosphate + 2 H(+)</text>
        <dbReference type="Rhea" id="RHEA:11680"/>
        <dbReference type="ChEBI" id="CHEBI:15377"/>
        <dbReference type="ChEBI" id="CHEBI:15378"/>
        <dbReference type="ChEBI" id="CHEBI:29985"/>
        <dbReference type="ChEBI" id="CHEBI:30616"/>
        <dbReference type="ChEBI" id="CHEBI:33019"/>
        <dbReference type="ChEBI" id="CHEBI:57464"/>
        <dbReference type="ChEBI" id="CHEBI:58115"/>
        <dbReference type="ChEBI" id="CHEBI:58359"/>
        <dbReference type="ChEBI" id="CHEBI:456215"/>
        <dbReference type="EC" id="6.3.5.2"/>
    </reaction>
</comment>
<comment type="pathway">
    <text evidence="1">Purine metabolism; GMP biosynthesis; GMP from XMP (L-Gln route): step 1/1.</text>
</comment>
<comment type="subunit">
    <text evidence="1">Homodimer.</text>
</comment>
<name>GUAA_ACTPJ</name>
<gene>
    <name evidence="1" type="primary">guaA</name>
    <name type="ordered locus">APJL_0585</name>
</gene>
<proteinExistence type="inferred from homology"/>
<protein>
    <recommendedName>
        <fullName evidence="1">GMP synthase [glutamine-hydrolyzing]</fullName>
        <ecNumber evidence="1">6.3.5.2</ecNumber>
    </recommendedName>
    <alternativeName>
        <fullName evidence="1">GMP synthetase</fullName>
    </alternativeName>
    <alternativeName>
        <fullName evidence="1">Glutamine amidotransferase</fullName>
    </alternativeName>
</protein>
<accession>B0BUF0</accession>
<organism>
    <name type="scientific">Actinobacillus pleuropneumoniae serotype 3 (strain JL03)</name>
    <dbReference type="NCBI Taxonomy" id="434271"/>
    <lineage>
        <taxon>Bacteria</taxon>
        <taxon>Pseudomonadati</taxon>
        <taxon>Pseudomonadota</taxon>
        <taxon>Gammaproteobacteria</taxon>
        <taxon>Pasteurellales</taxon>
        <taxon>Pasteurellaceae</taxon>
        <taxon>Actinobacillus</taxon>
    </lineage>
</organism>
<sequence length="523" mass="58192">MTNIHNHKILILDFGSQYTQLIARRVREIGVYCELWAWDVTEEQIREFNPTGIILSGGPESTTEENSPRAPEYVFNAGVPVLGICYGMQTMAMQLGGLTETSDHREFGYASVDLQATDALFAKLNDNLTASEPKLDVWMSHGDKVTRLPQGFQVTGITPTCPIAAMSDESRRFYGVQFHPEVTHTKSGLELLTNFVVGICGCECKWTAENIIEDAVARIKEQVGDDEVILGLSGGVDSSVTALLLHRAIGKNLHCVFVDNGLLRLNEGDQVMEMFGDKFGLNIIRVNAEDRFLDALKGIDEPEAKRKTIGKVFVDVFDDESKKLTSVKWLAQGTIYPDVIESAASKTGKAHVIKSHHNVGGLPDYMKLGLVEPLRELFKDEVRKIGLALGLPAEMLNRHPFPGPGLGVRVLGEIKKEYCDLLRKADAIFIEELYKADWYYKVSQAFTVFLPVKSVGVMGDGRKYDWVVSLRAVETIDFMTAHWAHLPYDLLGKISNRIINEVNGISRVVYDVSGKPPATIEWE</sequence>
<evidence type="ECO:0000255" key="1">
    <source>
        <dbReference type="HAMAP-Rule" id="MF_00344"/>
    </source>
</evidence>
<keyword id="KW-0067">ATP-binding</keyword>
<keyword id="KW-0315">Glutamine amidotransferase</keyword>
<keyword id="KW-0332">GMP biosynthesis</keyword>
<keyword id="KW-0436">Ligase</keyword>
<keyword id="KW-0547">Nucleotide-binding</keyword>
<keyword id="KW-0658">Purine biosynthesis</keyword>
<dbReference type="EC" id="6.3.5.2" evidence="1"/>
<dbReference type="EMBL" id="CP000687">
    <property type="protein sequence ID" value="ABY69155.1"/>
    <property type="molecule type" value="Genomic_DNA"/>
</dbReference>
<dbReference type="RefSeq" id="WP_005596834.1">
    <property type="nucleotide sequence ID" value="NC_010278.1"/>
</dbReference>
<dbReference type="SMR" id="B0BUF0"/>
<dbReference type="MEROPS" id="C26.957"/>
<dbReference type="GeneID" id="48598780"/>
<dbReference type="KEGG" id="apj:APJL_0585"/>
<dbReference type="HOGENOM" id="CLU_014340_0_5_6"/>
<dbReference type="UniPathway" id="UPA00189">
    <property type="reaction ID" value="UER00296"/>
</dbReference>
<dbReference type="Proteomes" id="UP000008547">
    <property type="component" value="Chromosome"/>
</dbReference>
<dbReference type="GO" id="GO:0005829">
    <property type="term" value="C:cytosol"/>
    <property type="evidence" value="ECO:0007669"/>
    <property type="project" value="TreeGrafter"/>
</dbReference>
<dbReference type="GO" id="GO:0005524">
    <property type="term" value="F:ATP binding"/>
    <property type="evidence" value="ECO:0007669"/>
    <property type="project" value="UniProtKB-UniRule"/>
</dbReference>
<dbReference type="GO" id="GO:0003921">
    <property type="term" value="F:GMP synthase activity"/>
    <property type="evidence" value="ECO:0007669"/>
    <property type="project" value="InterPro"/>
</dbReference>
<dbReference type="CDD" id="cd01742">
    <property type="entry name" value="GATase1_GMP_Synthase"/>
    <property type="match status" value="1"/>
</dbReference>
<dbReference type="CDD" id="cd01997">
    <property type="entry name" value="GMP_synthase_C"/>
    <property type="match status" value="1"/>
</dbReference>
<dbReference type="FunFam" id="3.30.300.10:FF:000002">
    <property type="entry name" value="GMP synthase [glutamine-hydrolyzing]"/>
    <property type="match status" value="1"/>
</dbReference>
<dbReference type="FunFam" id="3.40.50.620:FF:000001">
    <property type="entry name" value="GMP synthase [glutamine-hydrolyzing]"/>
    <property type="match status" value="1"/>
</dbReference>
<dbReference type="FunFam" id="3.40.50.880:FF:000001">
    <property type="entry name" value="GMP synthase [glutamine-hydrolyzing]"/>
    <property type="match status" value="1"/>
</dbReference>
<dbReference type="Gene3D" id="3.30.300.10">
    <property type="match status" value="1"/>
</dbReference>
<dbReference type="Gene3D" id="3.40.50.880">
    <property type="match status" value="1"/>
</dbReference>
<dbReference type="Gene3D" id="3.40.50.620">
    <property type="entry name" value="HUPs"/>
    <property type="match status" value="1"/>
</dbReference>
<dbReference type="HAMAP" id="MF_00344">
    <property type="entry name" value="GMP_synthase"/>
    <property type="match status" value="1"/>
</dbReference>
<dbReference type="InterPro" id="IPR029062">
    <property type="entry name" value="Class_I_gatase-like"/>
</dbReference>
<dbReference type="InterPro" id="IPR017926">
    <property type="entry name" value="GATASE"/>
</dbReference>
<dbReference type="InterPro" id="IPR001674">
    <property type="entry name" value="GMP_synth_C"/>
</dbReference>
<dbReference type="InterPro" id="IPR004739">
    <property type="entry name" value="GMP_synth_GATase"/>
</dbReference>
<dbReference type="InterPro" id="IPR022955">
    <property type="entry name" value="GMP_synthase"/>
</dbReference>
<dbReference type="InterPro" id="IPR025777">
    <property type="entry name" value="GMPS_ATP_PPase_dom"/>
</dbReference>
<dbReference type="InterPro" id="IPR022310">
    <property type="entry name" value="NAD/GMP_synthase"/>
</dbReference>
<dbReference type="InterPro" id="IPR014729">
    <property type="entry name" value="Rossmann-like_a/b/a_fold"/>
</dbReference>
<dbReference type="NCBIfam" id="TIGR00884">
    <property type="entry name" value="guaA_Cterm"/>
    <property type="match status" value="1"/>
</dbReference>
<dbReference type="NCBIfam" id="TIGR00888">
    <property type="entry name" value="guaA_Nterm"/>
    <property type="match status" value="1"/>
</dbReference>
<dbReference type="NCBIfam" id="NF000848">
    <property type="entry name" value="PRK00074.1"/>
    <property type="match status" value="1"/>
</dbReference>
<dbReference type="PANTHER" id="PTHR11922:SF2">
    <property type="entry name" value="GMP SYNTHASE [GLUTAMINE-HYDROLYZING]"/>
    <property type="match status" value="1"/>
</dbReference>
<dbReference type="PANTHER" id="PTHR11922">
    <property type="entry name" value="GMP SYNTHASE-RELATED"/>
    <property type="match status" value="1"/>
</dbReference>
<dbReference type="Pfam" id="PF00117">
    <property type="entry name" value="GATase"/>
    <property type="match status" value="1"/>
</dbReference>
<dbReference type="Pfam" id="PF00958">
    <property type="entry name" value="GMP_synt_C"/>
    <property type="match status" value="1"/>
</dbReference>
<dbReference type="Pfam" id="PF02540">
    <property type="entry name" value="NAD_synthase"/>
    <property type="match status" value="1"/>
</dbReference>
<dbReference type="PRINTS" id="PR00097">
    <property type="entry name" value="ANTSNTHASEII"/>
</dbReference>
<dbReference type="PRINTS" id="PR00099">
    <property type="entry name" value="CPSGATASE"/>
</dbReference>
<dbReference type="PRINTS" id="PR00096">
    <property type="entry name" value="GATASE"/>
</dbReference>
<dbReference type="SUPFAM" id="SSF52402">
    <property type="entry name" value="Adenine nucleotide alpha hydrolases-like"/>
    <property type="match status" value="1"/>
</dbReference>
<dbReference type="SUPFAM" id="SSF52317">
    <property type="entry name" value="Class I glutamine amidotransferase-like"/>
    <property type="match status" value="1"/>
</dbReference>
<dbReference type="SUPFAM" id="SSF54810">
    <property type="entry name" value="GMP synthetase C-terminal dimerisation domain"/>
    <property type="match status" value="1"/>
</dbReference>
<dbReference type="PROSITE" id="PS51273">
    <property type="entry name" value="GATASE_TYPE_1"/>
    <property type="match status" value="1"/>
</dbReference>
<dbReference type="PROSITE" id="PS51553">
    <property type="entry name" value="GMPS_ATP_PPASE"/>
    <property type="match status" value="1"/>
</dbReference>
<feature type="chain" id="PRO_1000120201" description="GMP synthase [glutamine-hydrolyzing]">
    <location>
        <begin position="1"/>
        <end position="523"/>
    </location>
</feature>
<feature type="domain" description="Glutamine amidotransferase type-1" evidence="1">
    <location>
        <begin position="8"/>
        <end position="205"/>
    </location>
</feature>
<feature type="domain" description="GMPS ATP-PPase" evidence="1">
    <location>
        <begin position="206"/>
        <end position="398"/>
    </location>
</feature>
<feature type="active site" description="Nucleophile" evidence="1">
    <location>
        <position position="85"/>
    </location>
</feature>
<feature type="active site" evidence="1">
    <location>
        <position position="179"/>
    </location>
</feature>
<feature type="active site" evidence="1">
    <location>
        <position position="181"/>
    </location>
</feature>
<feature type="binding site" evidence="1">
    <location>
        <begin position="233"/>
        <end position="239"/>
    </location>
    <ligand>
        <name>ATP</name>
        <dbReference type="ChEBI" id="CHEBI:30616"/>
    </ligand>
</feature>
<reference key="1">
    <citation type="journal article" date="2008" name="PLoS ONE">
        <title>Genome biology of Actinobacillus pleuropneumoniae JL03, an isolate of serotype 3 prevalent in China.</title>
        <authorList>
            <person name="Xu Z."/>
            <person name="Zhou Y."/>
            <person name="Li L."/>
            <person name="Zhou R."/>
            <person name="Xiao S."/>
            <person name="Wan Y."/>
            <person name="Zhang S."/>
            <person name="Wang K."/>
            <person name="Li W."/>
            <person name="Li L."/>
            <person name="Jin H."/>
            <person name="Kang M."/>
            <person name="Dalai B."/>
            <person name="Li T."/>
            <person name="Liu L."/>
            <person name="Cheng Y."/>
            <person name="Zhang L."/>
            <person name="Xu T."/>
            <person name="Zheng H."/>
            <person name="Pu S."/>
            <person name="Wang B."/>
            <person name="Gu W."/>
            <person name="Zhang X.L."/>
            <person name="Zhu G.-F."/>
            <person name="Wang S."/>
            <person name="Zhao G.-P."/>
            <person name="Chen H."/>
        </authorList>
    </citation>
    <scope>NUCLEOTIDE SEQUENCE [LARGE SCALE GENOMIC DNA]</scope>
    <source>
        <strain>JL03</strain>
    </source>
</reference>